<feature type="chain" id="PRO_0000073640" description="Calcium-binding protein SPEC 2C">
    <location>
        <begin position="1"/>
        <end position="151"/>
    </location>
</feature>
<feature type="domain" description="EF-hand 1" evidence="1">
    <location>
        <begin position="10"/>
        <end position="45"/>
    </location>
</feature>
<feature type="domain" description="EF-hand 2" evidence="1">
    <location>
        <begin position="46"/>
        <end position="78"/>
    </location>
</feature>
<feature type="domain" description="EF-hand 3" evidence="1">
    <location>
        <begin position="81"/>
        <end position="116"/>
    </location>
</feature>
<feature type="domain" description="EF-hand 4" evidence="1">
    <location>
        <begin position="118"/>
        <end position="151"/>
    </location>
</feature>
<feature type="binding site" evidence="1">
    <location>
        <position position="23"/>
    </location>
    <ligand>
        <name>Ca(2+)</name>
        <dbReference type="ChEBI" id="CHEBI:29108"/>
        <label>1</label>
    </ligand>
</feature>
<feature type="binding site" evidence="1">
    <location>
        <position position="25"/>
    </location>
    <ligand>
        <name>Ca(2+)</name>
        <dbReference type="ChEBI" id="CHEBI:29108"/>
        <label>1</label>
    </ligand>
</feature>
<feature type="binding site" evidence="1">
    <location>
        <position position="27"/>
    </location>
    <ligand>
        <name>Ca(2+)</name>
        <dbReference type="ChEBI" id="CHEBI:29108"/>
        <label>1</label>
    </ligand>
</feature>
<feature type="binding site" evidence="1">
    <location>
        <position position="29"/>
    </location>
    <ligand>
        <name>Ca(2+)</name>
        <dbReference type="ChEBI" id="CHEBI:29108"/>
        <label>1</label>
    </ligand>
</feature>
<feature type="binding site" evidence="1">
    <location>
        <position position="34"/>
    </location>
    <ligand>
        <name>Ca(2+)</name>
        <dbReference type="ChEBI" id="CHEBI:29108"/>
        <label>1</label>
    </ligand>
</feature>
<feature type="binding site" evidence="2">
    <location>
        <position position="59"/>
    </location>
    <ligand>
        <name>Ca(2+)</name>
        <dbReference type="ChEBI" id="CHEBI:29108"/>
        <label>2</label>
    </ligand>
</feature>
<feature type="binding site" evidence="2">
    <location>
        <position position="61"/>
    </location>
    <ligand>
        <name>Ca(2+)</name>
        <dbReference type="ChEBI" id="CHEBI:29108"/>
        <label>2</label>
    </ligand>
</feature>
<feature type="binding site" evidence="2">
    <location>
        <position position="63"/>
    </location>
    <ligand>
        <name>Ca(2+)</name>
        <dbReference type="ChEBI" id="CHEBI:29108"/>
        <label>2</label>
    </ligand>
</feature>
<feature type="binding site" evidence="2">
    <location>
        <position position="70"/>
    </location>
    <ligand>
        <name>Ca(2+)</name>
        <dbReference type="ChEBI" id="CHEBI:29108"/>
        <label>2</label>
    </ligand>
</feature>
<feature type="binding site" evidence="1">
    <location>
        <position position="94"/>
    </location>
    <ligand>
        <name>Ca(2+)</name>
        <dbReference type="ChEBI" id="CHEBI:29108"/>
        <label>3</label>
    </ligand>
</feature>
<feature type="binding site" evidence="1">
    <location>
        <position position="96"/>
    </location>
    <ligand>
        <name>Ca(2+)</name>
        <dbReference type="ChEBI" id="CHEBI:29108"/>
        <label>3</label>
    </ligand>
</feature>
<feature type="binding site" evidence="1">
    <location>
        <position position="98"/>
    </location>
    <ligand>
        <name>Ca(2+)</name>
        <dbReference type="ChEBI" id="CHEBI:29108"/>
        <label>3</label>
    </ligand>
</feature>
<feature type="binding site" evidence="1">
    <location>
        <position position="100"/>
    </location>
    <ligand>
        <name>Ca(2+)</name>
        <dbReference type="ChEBI" id="CHEBI:29108"/>
        <label>3</label>
    </ligand>
</feature>
<feature type="binding site" evidence="1">
    <location>
        <position position="105"/>
    </location>
    <ligand>
        <name>Ca(2+)</name>
        <dbReference type="ChEBI" id="CHEBI:29108"/>
        <label>3</label>
    </ligand>
</feature>
<feature type="binding site" evidence="2">
    <location>
        <position position="131"/>
    </location>
    <ligand>
        <name>Ca(2+)</name>
        <dbReference type="ChEBI" id="CHEBI:29108"/>
        <label>4</label>
    </ligand>
</feature>
<feature type="binding site" evidence="2">
    <location>
        <position position="135"/>
    </location>
    <ligand>
        <name>Ca(2+)</name>
        <dbReference type="ChEBI" id="CHEBI:29108"/>
        <label>4</label>
    </ligand>
</feature>
<feature type="binding site" evidence="2">
    <location>
        <position position="137"/>
    </location>
    <ligand>
        <name>Ca(2+)</name>
        <dbReference type="ChEBI" id="CHEBI:29108"/>
        <label>4</label>
    </ligand>
</feature>
<feature type="binding site" evidence="2">
    <location>
        <position position="142"/>
    </location>
    <ligand>
        <name>Ca(2+)</name>
        <dbReference type="ChEBI" id="CHEBI:29108"/>
        <label>4</label>
    </ligand>
</feature>
<feature type="sequence conflict" description="In Ref. 1." evidence="2" ref="1">
    <original>E</original>
    <variation>D</variation>
    <location>
        <position position="45"/>
    </location>
</feature>
<feature type="sequence conflict" description="In Ref. 1." evidence="2" ref="1">
    <original>E</original>
    <variation>L</variation>
    <location>
        <position position="77"/>
    </location>
</feature>
<feature type="sequence conflict" description="In Ref. 1." evidence="2" ref="1">
    <original>E</original>
    <variation>K</variation>
    <location>
        <position position="137"/>
    </location>
</feature>
<feature type="sequence conflict" description="In Ref. 1." evidence="2" ref="1">
    <original>RA</original>
    <variation>VQ</variation>
    <location>
        <begin position="140"/>
        <end position="141"/>
    </location>
</feature>
<feature type="sequence conflict" description="In Ref. 1." evidence="2" ref="1">
    <original>Q</original>
    <variation>E</variation>
    <location>
        <position position="148"/>
    </location>
</feature>
<comment type="function">
    <text>Calcium-binding protein involved in larval development and metamorphosis. Likely to function as calcium buffers mediating the transport of calcium from the sea water to the blastocoel where calcium is required for skeleton formation.</text>
</comment>
<comment type="tissue specificity">
    <text>Found in cell lineages giving rise to the aboral ectoderm, a squamous epithelium covering the surface of the late stage embryo and larva.</text>
</comment>
<comment type="developmental stage">
    <text>Accumulate in embryos and larvae, but not in adults.</text>
</comment>
<dbReference type="EMBL" id="X12772">
    <property type="protein sequence ID" value="CAA31260.2"/>
    <property type="molecule type" value="Genomic_DNA"/>
</dbReference>
<dbReference type="EMBL" id="X14534">
    <property type="protein sequence ID" value="CAA31260.2"/>
    <property type="status" value="JOINED"/>
    <property type="molecule type" value="Genomic_DNA"/>
</dbReference>
<dbReference type="EMBL" id="X14535">
    <property type="protein sequence ID" value="CAA31260.2"/>
    <property type="status" value="JOINED"/>
    <property type="molecule type" value="Genomic_DNA"/>
</dbReference>
<dbReference type="EMBL" id="X14536">
    <property type="protein sequence ID" value="CAA31260.2"/>
    <property type="status" value="JOINED"/>
    <property type="molecule type" value="Genomic_DNA"/>
</dbReference>
<dbReference type="EMBL" id="X14537">
    <property type="protein sequence ID" value="CAA31260.2"/>
    <property type="status" value="JOINED"/>
    <property type="molecule type" value="Genomic_DNA"/>
</dbReference>
<dbReference type="EMBL" id="X14538">
    <property type="protein sequence ID" value="CAA31260.2"/>
    <property type="status" value="JOINED"/>
    <property type="molecule type" value="Genomic_DNA"/>
</dbReference>
<dbReference type="PIR" id="S01771">
    <property type="entry name" value="MCUR2C"/>
</dbReference>
<dbReference type="RefSeq" id="NP_999769.1">
    <property type="nucleotide sequence ID" value="NM_214604.1"/>
</dbReference>
<dbReference type="SMR" id="P04111"/>
<dbReference type="STRING" id="7668.P04111"/>
<dbReference type="EnsemblMetazoa" id="NM_214604">
    <property type="protein sequence ID" value="NP_999769"/>
    <property type="gene ID" value="GeneID_373447"/>
</dbReference>
<dbReference type="GeneID" id="373447"/>
<dbReference type="KEGG" id="spu:373447"/>
<dbReference type="CTD" id="373447"/>
<dbReference type="eggNOG" id="KOG0027">
    <property type="taxonomic scope" value="Eukaryota"/>
</dbReference>
<dbReference type="HOGENOM" id="CLU_2609113_0_0_1"/>
<dbReference type="InParanoid" id="P04111"/>
<dbReference type="OMA" id="DTKNNGY"/>
<dbReference type="OrthoDB" id="26525at2759"/>
<dbReference type="PhylomeDB" id="P04111"/>
<dbReference type="Proteomes" id="UP000007110">
    <property type="component" value="Unassembled WGS sequence"/>
</dbReference>
<dbReference type="GO" id="GO:0005509">
    <property type="term" value="F:calcium ion binding"/>
    <property type="evidence" value="ECO:0007669"/>
    <property type="project" value="InterPro"/>
</dbReference>
<dbReference type="CDD" id="cd00051">
    <property type="entry name" value="EFh"/>
    <property type="match status" value="2"/>
</dbReference>
<dbReference type="FunFam" id="1.10.238.10:FF:000402">
    <property type="entry name" value="Calcium-binding protein SPEC 2D"/>
    <property type="match status" value="1"/>
</dbReference>
<dbReference type="Gene3D" id="1.10.238.10">
    <property type="entry name" value="EF-hand"/>
    <property type="match status" value="2"/>
</dbReference>
<dbReference type="InterPro" id="IPR050230">
    <property type="entry name" value="CALM/Myosin/TropC-like"/>
</dbReference>
<dbReference type="InterPro" id="IPR011992">
    <property type="entry name" value="EF-hand-dom_pair"/>
</dbReference>
<dbReference type="InterPro" id="IPR018247">
    <property type="entry name" value="EF_Hand_1_Ca_BS"/>
</dbReference>
<dbReference type="InterPro" id="IPR002048">
    <property type="entry name" value="EF_hand_dom"/>
</dbReference>
<dbReference type="PANTHER" id="PTHR23048:SF0">
    <property type="entry name" value="CALMODULIN LIKE 3"/>
    <property type="match status" value="1"/>
</dbReference>
<dbReference type="PANTHER" id="PTHR23048">
    <property type="entry name" value="MYOSIN LIGHT CHAIN 1, 3"/>
    <property type="match status" value="1"/>
</dbReference>
<dbReference type="Pfam" id="PF13499">
    <property type="entry name" value="EF-hand_7"/>
    <property type="match status" value="2"/>
</dbReference>
<dbReference type="SMART" id="SM00054">
    <property type="entry name" value="EFh"/>
    <property type="match status" value="4"/>
</dbReference>
<dbReference type="SUPFAM" id="SSF47473">
    <property type="entry name" value="EF-hand"/>
    <property type="match status" value="1"/>
</dbReference>
<dbReference type="PROSITE" id="PS00018">
    <property type="entry name" value="EF_HAND_1"/>
    <property type="match status" value="2"/>
</dbReference>
<dbReference type="PROSITE" id="PS50222">
    <property type="entry name" value="EF_HAND_2"/>
    <property type="match status" value="4"/>
</dbReference>
<accession>P04111</accession>
<gene>
    <name type="primary">SPEC2C</name>
</gene>
<evidence type="ECO:0000255" key="1">
    <source>
        <dbReference type="PROSITE-ProRule" id="PRU00448"/>
    </source>
</evidence>
<evidence type="ECO:0000305" key="2"/>
<proteinExistence type="evidence at transcript level"/>
<protein>
    <recommendedName>
        <fullName>Calcium-binding protein SPEC 2C</fullName>
    </recommendedName>
</protein>
<name>SPE2C_STRPU</name>
<keyword id="KW-0106">Calcium</keyword>
<keyword id="KW-0479">Metal-binding</keyword>
<keyword id="KW-1185">Reference proteome</keyword>
<keyword id="KW-0677">Repeat</keyword>
<sequence length="151" mass="16991">MAVQLFFTEEQRKVFKSSFKSIDADGDGKITPEELKAAFKSIEIELTQEKIDEMMSMVDKDGSRPVDFSEILMKKAEQMRGKGAQYFKAFDALDTDKSGSLSPEELRTALSACTDPPMTKEEIDAIIKKADGNNDGEIRRAEFVRMIQSSY</sequence>
<organism>
    <name type="scientific">Strongylocentrotus purpuratus</name>
    <name type="common">Purple sea urchin</name>
    <dbReference type="NCBI Taxonomy" id="7668"/>
    <lineage>
        <taxon>Eukaryota</taxon>
        <taxon>Metazoa</taxon>
        <taxon>Echinodermata</taxon>
        <taxon>Eleutherozoa</taxon>
        <taxon>Echinozoa</taxon>
        <taxon>Echinoidea</taxon>
        <taxon>Euechinoidea</taxon>
        <taxon>Echinacea</taxon>
        <taxon>Camarodonta</taxon>
        <taxon>Echinidea</taxon>
        <taxon>Strongylocentrotidae</taxon>
        <taxon>Strongylocentrotus</taxon>
    </lineage>
</organism>
<reference key="1">
    <citation type="journal article" date="1984" name="Cell">
        <title>Novel proteins belonging to the troponin C superfamily are encoded by a set of mRNAs in sea urchin embryos.</title>
        <authorList>
            <person name="Carpenter C.D."/>
            <person name="Bruskin A.M."/>
            <person name="Hardin P.E."/>
            <person name="Keast M.J."/>
            <person name="Anstrom J.A."/>
            <person name="Tyner A.L."/>
            <person name="Brandhorst B.P."/>
            <person name="Klein W.H."/>
        </authorList>
    </citation>
    <scope>NUCLEOTIDE SEQUENCE [GENOMIC DNA]</scope>
</reference>
<reference key="2">
    <citation type="journal article" date="1988" name="J. Mol. Biol.">
        <title>Spec2 genes of Strongylocentrotus purpuratus. Structure and differential expression in embryonic aboral ectoderm cells.</title>
        <authorList>
            <person name="Hardin P.E."/>
            <person name="Angerer L.M."/>
            <person name="Hardin S.H."/>
            <person name="Angerer R.C."/>
            <person name="Klein W.H."/>
        </authorList>
    </citation>
    <scope>NUCLEOTIDE SEQUENCE [GENOMIC DNA]</scope>
</reference>